<comment type="function">
    <text evidence="1">Aspartyl-tRNA synthetase with relaxed tRNA specificity since it is able to aspartylate not only its cognate tRNA(Asp) but also tRNA(Asn). Reaction proceeds in two steps: L-aspartate is first activated by ATP to form Asp-AMP and then transferred to the acceptor end of tRNA(Asp/Asn).</text>
</comment>
<comment type="catalytic activity">
    <reaction evidence="1">
        <text>tRNA(Asx) + L-aspartate + ATP = L-aspartyl-tRNA(Asx) + AMP + diphosphate</text>
        <dbReference type="Rhea" id="RHEA:18349"/>
        <dbReference type="Rhea" id="RHEA-COMP:9710"/>
        <dbReference type="Rhea" id="RHEA-COMP:9711"/>
        <dbReference type="ChEBI" id="CHEBI:29991"/>
        <dbReference type="ChEBI" id="CHEBI:30616"/>
        <dbReference type="ChEBI" id="CHEBI:33019"/>
        <dbReference type="ChEBI" id="CHEBI:78442"/>
        <dbReference type="ChEBI" id="CHEBI:78516"/>
        <dbReference type="ChEBI" id="CHEBI:456215"/>
        <dbReference type="EC" id="6.1.1.23"/>
    </reaction>
</comment>
<comment type="subunit">
    <text evidence="1">Homodimer.</text>
</comment>
<comment type="subcellular location">
    <subcellularLocation>
        <location evidence="1">Cytoplasm</location>
    </subcellularLocation>
</comment>
<comment type="similarity">
    <text evidence="1">Belongs to the class-II aminoacyl-tRNA synthetase family. Type 1 subfamily.</text>
</comment>
<reference key="1">
    <citation type="journal article" date="2009" name="BMC Genomics">
        <title>Conservation in the face of diversity: multistrain analysis of an intracellular bacterium.</title>
        <authorList>
            <person name="Dark M.J."/>
            <person name="Herndon D.R."/>
            <person name="Kappmeyer L.S."/>
            <person name="Gonzales M.P."/>
            <person name="Nordeen E."/>
            <person name="Palmer G.H."/>
            <person name="Knowles D.P. Jr."/>
            <person name="Brayton K.A."/>
        </authorList>
    </citation>
    <scope>NUCLEOTIDE SEQUENCE [LARGE SCALE GENOMIC DNA]</scope>
    <source>
        <strain>Florida</strain>
    </source>
</reference>
<name>SYDND_ANAMF</name>
<dbReference type="EC" id="6.1.1.23" evidence="1"/>
<dbReference type="EMBL" id="CP001079">
    <property type="protein sequence ID" value="ACM49032.1"/>
    <property type="molecule type" value="Genomic_DNA"/>
</dbReference>
<dbReference type="RefSeq" id="WP_010267131.1">
    <property type="nucleotide sequence ID" value="NZ_AFMS01000028.1"/>
</dbReference>
<dbReference type="SMR" id="B9KHS0"/>
<dbReference type="STRING" id="320483.AMF_148"/>
<dbReference type="GeneID" id="7398606"/>
<dbReference type="KEGG" id="amf:AMF_148"/>
<dbReference type="PATRIC" id="fig|320483.3.peg.170"/>
<dbReference type="eggNOG" id="COG0173">
    <property type="taxonomic scope" value="Bacteria"/>
</dbReference>
<dbReference type="HOGENOM" id="CLU_014330_3_2_5"/>
<dbReference type="Proteomes" id="UP000007307">
    <property type="component" value="Chromosome"/>
</dbReference>
<dbReference type="GO" id="GO:0005737">
    <property type="term" value="C:cytoplasm"/>
    <property type="evidence" value="ECO:0007669"/>
    <property type="project" value="UniProtKB-SubCell"/>
</dbReference>
<dbReference type="GO" id="GO:0004815">
    <property type="term" value="F:aspartate-tRNA ligase activity"/>
    <property type="evidence" value="ECO:0007669"/>
    <property type="project" value="UniProtKB-UniRule"/>
</dbReference>
<dbReference type="GO" id="GO:0050560">
    <property type="term" value="F:aspartate-tRNA(Asn) ligase activity"/>
    <property type="evidence" value="ECO:0007669"/>
    <property type="project" value="UniProtKB-EC"/>
</dbReference>
<dbReference type="GO" id="GO:0005524">
    <property type="term" value="F:ATP binding"/>
    <property type="evidence" value="ECO:0007669"/>
    <property type="project" value="UniProtKB-UniRule"/>
</dbReference>
<dbReference type="GO" id="GO:0003676">
    <property type="term" value="F:nucleic acid binding"/>
    <property type="evidence" value="ECO:0007669"/>
    <property type="project" value="InterPro"/>
</dbReference>
<dbReference type="GO" id="GO:0006422">
    <property type="term" value="P:aspartyl-tRNA aminoacylation"/>
    <property type="evidence" value="ECO:0007669"/>
    <property type="project" value="UniProtKB-UniRule"/>
</dbReference>
<dbReference type="CDD" id="cd00777">
    <property type="entry name" value="AspRS_core"/>
    <property type="match status" value="1"/>
</dbReference>
<dbReference type="CDD" id="cd04317">
    <property type="entry name" value="EcAspRS_like_N"/>
    <property type="match status" value="1"/>
</dbReference>
<dbReference type="Gene3D" id="3.30.930.10">
    <property type="entry name" value="Bira Bifunctional Protein, Domain 2"/>
    <property type="match status" value="1"/>
</dbReference>
<dbReference type="Gene3D" id="3.30.1360.30">
    <property type="entry name" value="GAD-like domain"/>
    <property type="match status" value="1"/>
</dbReference>
<dbReference type="Gene3D" id="2.40.50.140">
    <property type="entry name" value="Nucleic acid-binding proteins"/>
    <property type="match status" value="1"/>
</dbReference>
<dbReference type="HAMAP" id="MF_00044">
    <property type="entry name" value="Asp_tRNA_synth_type1"/>
    <property type="match status" value="1"/>
</dbReference>
<dbReference type="InterPro" id="IPR004364">
    <property type="entry name" value="Aa-tRNA-synt_II"/>
</dbReference>
<dbReference type="InterPro" id="IPR006195">
    <property type="entry name" value="aa-tRNA-synth_II"/>
</dbReference>
<dbReference type="InterPro" id="IPR045864">
    <property type="entry name" value="aa-tRNA-synth_II/BPL/LPL"/>
</dbReference>
<dbReference type="InterPro" id="IPR004524">
    <property type="entry name" value="Asp-tRNA-ligase_1"/>
</dbReference>
<dbReference type="InterPro" id="IPR047089">
    <property type="entry name" value="Asp-tRNA-ligase_1_N"/>
</dbReference>
<dbReference type="InterPro" id="IPR002312">
    <property type="entry name" value="Asp/Asn-tRNA-synth_IIb"/>
</dbReference>
<dbReference type="InterPro" id="IPR047090">
    <property type="entry name" value="AspRS_core"/>
</dbReference>
<dbReference type="InterPro" id="IPR004115">
    <property type="entry name" value="GAD-like_sf"/>
</dbReference>
<dbReference type="InterPro" id="IPR029351">
    <property type="entry name" value="GAD_dom"/>
</dbReference>
<dbReference type="InterPro" id="IPR012340">
    <property type="entry name" value="NA-bd_OB-fold"/>
</dbReference>
<dbReference type="InterPro" id="IPR004365">
    <property type="entry name" value="NA-bd_OB_tRNA"/>
</dbReference>
<dbReference type="NCBIfam" id="TIGR00459">
    <property type="entry name" value="aspS_bact"/>
    <property type="match status" value="1"/>
</dbReference>
<dbReference type="NCBIfam" id="NF001750">
    <property type="entry name" value="PRK00476.1"/>
    <property type="match status" value="1"/>
</dbReference>
<dbReference type="PANTHER" id="PTHR22594:SF5">
    <property type="entry name" value="ASPARTATE--TRNA LIGASE, MITOCHONDRIAL"/>
    <property type="match status" value="1"/>
</dbReference>
<dbReference type="PANTHER" id="PTHR22594">
    <property type="entry name" value="ASPARTYL/LYSYL-TRNA SYNTHETASE"/>
    <property type="match status" value="1"/>
</dbReference>
<dbReference type="Pfam" id="PF02938">
    <property type="entry name" value="GAD"/>
    <property type="match status" value="1"/>
</dbReference>
<dbReference type="Pfam" id="PF00152">
    <property type="entry name" value="tRNA-synt_2"/>
    <property type="match status" value="1"/>
</dbReference>
<dbReference type="Pfam" id="PF01336">
    <property type="entry name" value="tRNA_anti-codon"/>
    <property type="match status" value="1"/>
</dbReference>
<dbReference type="PRINTS" id="PR01042">
    <property type="entry name" value="TRNASYNTHASP"/>
</dbReference>
<dbReference type="SUPFAM" id="SSF55681">
    <property type="entry name" value="Class II aaRS and biotin synthetases"/>
    <property type="match status" value="1"/>
</dbReference>
<dbReference type="SUPFAM" id="SSF55261">
    <property type="entry name" value="GAD domain-like"/>
    <property type="match status" value="1"/>
</dbReference>
<dbReference type="SUPFAM" id="SSF50249">
    <property type="entry name" value="Nucleic acid-binding proteins"/>
    <property type="match status" value="1"/>
</dbReference>
<dbReference type="PROSITE" id="PS50862">
    <property type="entry name" value="AA_TRNA_LIGASE_II"/>
    <property type="match status" value="1"/>
</dbReference>
<sequence>MNIYRTHVCNELGVAHVGNEVALSGWVYRKRDHGGLLFVDLRDFYGITQLIFNESENPELFNRMATIGLESVITVRGIVAERSEDNVNASIETGHVEVKVSTLTVVSEAAPLPLHVPTSFSYPEDIRLQHRFLDLRCDKVKNSILLRSMVVSELRRAMEALGFIEVHTPILTSSSPEGARDYIVPSRTHAGKFYALPQAPQIFKQLLMVGGFDKYFQIAPCFRDEDSRADRSPGEFYQLDMEMSFVTQEDVFAAIEPVLYGLFAKFAGADKKVDRQFPRITYRDSMIRYGSDKPDLRNPLVISDVTEIFRNSGFRTFQAGVEAGEVVRAIPAPNTSGKPRSFFDDKIERAKEFGARGLGYVTYEADGTAKGPIAKFLSEDELARIRSAAGVGNGDSVFFMSDTADKAADFAGKIRELLGLELGLIEHDTFKFCWIVDFPYFKCEDGELDFCHNPFSMPQGEMEALEQQNPLDIIAYQYDIVCNGIEISSGAIRNHRLDVMYKAFSMVGYDEQTVNSKFGALVRAFKFGAPPHGGLAPGIDRIVMLLADAPNIREVICFPLNQTGEDLLMGAPSEVSPAHLQELSIALNIKRK</sequence>
<evidence type="ECO:0000255" key="1">
    <source>
        <dbReference type="HAMAP-Rule" id="MF_00044"/>
    </source>
</evidence>
<gene>
    <name evidence="1" type="primary">aspS</name>
    <name type="ordered locus">AMF_148</name>
</gene>
<organism>
    <name type="scientific">Anaplasma marginale (strain Florida)</name>
    <dbReference type="NCBI Taxonomy" id="320483"/>
    <lineage>
        <taxon>Bacteria</taxon>
        <taxon>Pseudomonadati</taxon>
        <taxon>Pseudomonadota</taxon>
        <taxon>Alphaproteobacteria</taxon>
        <taxon>Rickettsiales</taxon>
        <taxon>Anaplasmataceae</taxon>
        <taxon>Anaplasma</taxon>
    </lineage>
</organism>
<keyword id="KW-0030">Aminoacyl-tRNA synthetase</keyword>
<keyword id="KW-0067">ATP-binding</keyword>
<keyword id="KW-0963">Cytoplasm</keyword>
<keyword id="KW-0436">Ligase</keyword>
<keyword id="KW-0547">Nucleotide-binding</keyword>
<keyword id="KW-0648">Protein biosynthesis</keyword>
<keyword id="KW-1185">Reference proteome</keyword>
<protein>
    <recommendedName>
        <fullName evidence="1">Aspartate--tRNA(Asp/Asn) ligase</fullName>
        <ecNumber evidence="1">6.1.1.23</ecNumber>
    </recommendedName>
    <alternativeName>
        <fullName evidence="1">Aspartyl-tRNA synthetase</fullName>
        <shortName evidence="1">AspRS</shortName>
    </alternativeName>
    <alternativeName>
        <fullName evidence="1">Non-discriminating aspartyl-tRNA synthetase</fullName>
        <shortName evidence="1">ND-AspRS</shortName>
    </alternativeName>
</protein>
<proteinExistence type="inferred from homology"/>
<accession>B9KHS0</accession>
<feature type="chain" id="PRO_1000198951" description="Aspartate--tRNA(Asp/Asn) ligase">
    <location>
        <begin position="1"/>
        <end position="592"/>
    </location>
</feature>
<feature type="region of interest" description="Aspartate" evidence="1">
    <location>
        <begin position="201"/>
        <end position="204"/>
    </location>
</feature>
<feature type="binding site" evidence="1">
    <location>
        <position position="177"/>
    </location>
    <ligand>
        <name>L-aspartate</name>
        <dbReference type="ChEBI" id="CHEBI:29991"/>
    </ligand>
</feature>
<feature type="binding site" evidence="1">
    <location>
        <begin position="223"/>
        <end position="225"/>
    </location>
    <ligand>
        <name>ATP</name>
        <dbReference type="ChEBI" id="CHEBI:30616"/>
    </ligand>
</feature>
<feature type="binding site" evidence="1">
    <location>
        <position position="223"/>
    </location>
    <ligand>
        <name>L-aspartate</name>
        <dbReference type="ChEBI" id="CHEBI:29991"/>
    </ligand>
</feature>
<feature type="binding site" evidence="1">
    <location>
        <position position="452"/>
    </location>
    <ligand>
        <name>L-aspartate</name>
        <dbReference type="ChEBI" id="CHEBI:29991"/>
    </ligand>
</feature>
<feature type="binding site" evidence="1">
    <location>
        <position position="486"/>
    </location>
    <ligand>
        <name>ATP</name>
        <dbReference type="ChEBI" id="CHEBI:30616"/>
    </ligand>
</feature>
<feature type="binding site" evidence="1">
    <location>
        <position position="493"/>
    </location>
    <ligand>
        <name>L-aspartate</name>
        <dbReference type="ChEBI" id="CHEBI:29991"/>
    </ligand>
</feature>
<feature type="binding site" evidence="1">
    <location>
        <begin position="538"/>
        <end position="541"/>
    </location>
    <ligand>
        <name>ATP</name>
        <dbReference type="ChEBI" id="CHEBI:30616"/>
    </ligand>
</feature>
<feature type="site" description="Important for tRNA non-discrimination" evidence="1">
    <location>
        <position position="33"/>
    </location>
</feature>